<feature type="chain" id="PRO_0000331956" description="Methionine--tRNA ligase">
    <location>
        <begin position="1"/>
        <end position="565"/>
    </location>
</feature>
<feature type="short sequence motif" description="'HIGH' region">
    <location>
        <begin position="16"/>
        <end position="26"/>
    </location>
</feature>
<feature type="short sequence motif" description="'KMSKS' region">
    <location>
        <begin position="338"/>
        <end position="342"/>
    </location>
</feature>
<feature type="binding site" evidence="1">
    <location>
        <position position="148"/>
    </location>
    <ligand>
        <name>Zn(2+)</name>
        <dbReference type="ChEBI" id="CHEBI:29105"/>
    </ligand>
</feature>
<feature type="binding site" evidence="1">
    <location>
        <position position="151"/>
    </location>
    <ligand>
        <name>Zn(2+)</name>
        <dbReference type="ChEBI" id="CHEBI:29105"/>
    </ligand>
</feature>
<feature type="binding site" evidence="1">
    <location>
        <position position="161"/>
    </location>
    <ligand>
        <name>Zn(2+)</name>
        <dbReference type="ChEBI" id="CHEBI:29105"/>
    </ligand>
</feature>
<feature type="binding site" evidence="1">
    <location>
        <position position="164"/>
    </location>
    <ligand>
        <name>Zn(2+)</name>
        <dbReference type="ChEBI" id="CHEBI:29105"/>
    </ligand>
</feature>
<feature type="binding site" evidence="1">
    <location>
        <position position="341"/>
    </location>
    <ligand>
        <name>ATP</name>
        <dbReference type="ChEBI" id="CHEBI:30616"/>
    </ligand>
</feature>
<comment type="function">
    <text evidence="1">Is required not only for elongation of protein synthesis but also for the initiation of all mRNA translation through initiator tRNA(fMet) aminoacylation.</text>
</comment>
<comment type="catalytic activity">
    <reaction evidence="1">
        <text>tRNA(Met) + L-methionine + ATP = L-methionyl-tRNA(Met) + AMP + diphosphate</text>
        <dbReference type="Rhea" id="RHEA:13481"/>
        <dbReference type="Rhea" id="RHEA-COMP:9667"/>
        <dbReference type="Rhea" id="RHEA-COMP:9698"/>
        <dbReference type="ChEBI" id="CHEBI:30616"/>
        <dbReference type="ChEBI" id="CHEBI:33019"/>
        <dbReference type="ChEBI" id="CHEBI:57844"/>
        <dbReference type="ChEBI" id="CHEBI:78442"/>
        <dbReference type="ChEBI" id="CHEBI:78530"/>
        <dbReference type="ChEBI" id="CHEBI:456215"/>
        <dbReference type="EC" id="6.1.1.10"/>
    </reaction>
</comment>
<comment type="cofactor">
    <cofactor evidence="1">
        <name>Zn(2+)</name>
        <dbReference type="ChEBI" id="CHEBI:29105"/>
    </cofactor>
    <text evidence="1">Binds 1 zinc ion per subunit.</text>
</comment>
<comment type="subcellular location">
    <subcellularLocation>
        <location evidence="1">Cytoplasm</location>
    </subcellularLocation>
</comment>
<comment type="similarity">
    <text evidence="1">Belongs to the class-I aminoacyl-tRNA synthetase family. MetG type 1 subfamily.</text>
</comment>
<organism>
    <name type="scientific">Thermofilum pendens (strain DSM 2475 / Hrk 5)</name>
    <dbReference type="NCBI Taxonomy" id="368408"/>
    <lineage>
        <taxon>Archaea</taxon>
        <taxon>Thermoproteota</taxon>
        <taxon>Thermoprotei</taxon>
        <taxon>Thermofilales</taxon>
        <taxon>Thermofilaceae</taxon>
        <taxon>Thermofilum</taxon>
    </lineage>
</organism>
<proteinExistence type="inferred from homology"/>
<dbReference type="EC" id="6.1.1.10" evidence="1"/>
<dbReference type="EMBL" id="CP000505">
    <property type="protein sequence ID" value="ABL78019.1"/>
    <property type="molecule type" value="Genomic_DNA"/>
</dbReference>
<dbReference type="SMR" id="A1RXT9"/>
<dbReference type="STRING" id="368408.Tpen_0615"/>
<dbReference type="EnsemblBacteria" id="ABL78019">
    <property type="protein sequence ID" value="ABL78019"/>
    <property type="gene ID" value="Tpen_0615"/>
</dbReference>
<dbReference type="KEGG" id="tpe:Tpen_0615"/>
<dbReference type="eggNOG" id="arCOG00810">
    <property type="taxonomic scope" value="Archaea"/>
</dbReference>
<dbReference type="HOGENOM" id="CLU_009710_1_2_2"/>
<dbReference type="OrthoDB" id="371856at2157"/>
<dbReference type="Proteomes" id="UP000000641">
    <property type="component" value="Chromosome"/>
</dbReference>
<dbReference type="GO" id="GO:0017101">
    <property type="term" value="C:aminoacyl-tRNA synthetase multienzyme complex"/>
    <property type="evidence" value="ECO:0007669"/>
    <property type="project" value="TreeGrafter"/>
</dbReference>
<dbReference type="GO" id="GO:0005829">
    <property type="term" value="C:cytosol"/>
    <property type="evidence" value="ECO:0007669"/>
    <property type="project" value="TreeGrafter"/>
</dbReference>
<dbReference type="GO" id="GO:0005524">
    <property type="term" value="F:ATP binding"/>
    <property type="evidence" value="ECO:0007669"/>
    <property type="project" value="UniProtKB-UniRule"/>
</dbReference>
<dbReference type="GO" id="GO:0046872">
    <property type="term" value="F:metal ion binding"/>
    <property type="evidence" value="ECO:0007669"/>
    <property type="project" value="UniProtKB-KW"/>
</dbReference>
<dbReference type="GO" id="GO:0004825">
    <property type="term" value="F:methionine-tRNA ligase activity"/>
    <property type="evidence" value="ECO:0007669"/>
    <property type="project" value="UniProtKB-UniRule"/>
</dbReference>
<dbReference type="GO" id="GO:0006431">
    <property type="term" value="P:methionyl-tRNA aminoacylation"/>
    <property type="evidence" value="ECO:0007669"/>
    <property type="project" value="UniProtKB-UniRule"/>
</dbReference>
<dbReference type="CDD" id="cd07957">
    <property type="entry name" value="Anticodon_Ia_Met"/>
    <property type="match status" value="1"/>
</dbReference>
<dbReference type="CDD" id="cd00814">
    <property type="entry name" value="MetRS_core"/>
    <property type="match status" value="1"/>
</dbReference>
<dbReference type="FunFam" id="2.20.28.20:FF:000001">
    <property type="entry name" value="Methionine--tRNA ligase"/>
    <property type="match status" value="1"/>
</dbReference>
<dbReference type="Gene3D" id="3.40.50.620">
    <property type="entry name" value="HUPs"/>
    <property type="match status" value="1"/>
</dbReference>
<dbReference type="Gene3D" id="1.10.730.10">
    <property type="entry name" value="Isoleucyl-tRNA Synthetase, Domain 1"/>
    <property type="match status" value="1"/>
</dbReference>
<dbReference type="Gene3D" id="2.20.28.20">
    <property type="entry name" value="Methionyl-tRNA synthetase, Zn-domain"/>
    <property type="match status" value="1"/>
</dbReference>
<dbReference type="HAMAP" id="MF_00098">
    <property type="entry name" value="Met_tRNA_synth_type1"/>
    <property type="match status" value="1"/>
</dbReference>
<dbReference type="InterPro" id="IPR041872">
    <property type="entry name" value="Anticodon_Met"/>
</dbReference>
<dbReference type="InterPro" id="IPR023458">
    <property type="entry name" value="Met-tRNA_ligase_1"/>
</dbReference>
<dbReference type="InterPro" id="IPR014758">
    <property type="entry name" value="Met-tRNA_synth"/>
</dbReference>
<dbReference type="InterPro" id="IPR015413">
    <property type="entry name" value="Methionyl/Leucyl_tRNA_Synth"/>
</dbReference>
<dbReference type="InterPro" id="IPR033911">
    <property type="entry name" value="MetRS_core"/>
</dbReference>
<dbReference type="InterPro" id="IPR029038">
    <property type="entry name" value="MetRS_Zn"/>
</dbReference>
<dbReference type="InterPro" id="IPR014729">
    <property type="entry name" value="Rossmann-like_a/b/a_fold"/>
</dbReference>
<dbReference type="InterPro" id="IPR009080">
    <property type="entry name" value="tRNAsynth_Ia_anticodon-bd"/>
</dbReference>
<dbReference type="NCBIfam" id="TIGR00398">
    <property type="entry name" value="metG"/>
    <property type="match status" value="1"/>
</dbReference>
<dbReference type="PANTHER" id="PTHR45765">
    <property type="entry name" value="METHIONINE--TRNA LIGASE"/>
    <property type="match status" value="1"/>
</dbReference>
<dbReference type="PANTHER" id="PTHR45765:SF1">
    <property type="entry name" value="METHIONINE--TRNA LIGASE, CYTOPLASMIC"/>
    <property type="match status" value="1"/>
</dbReference>
<dbReference type="Pfam" id="PF19303">
    <property type="entry name" value="Anticodon_3"/>
    <property type="match status" value="1"/>
</dbReference>
<dbReference type="Pfam" id="PF09334">
    <property type="entry name" value="tRNA-synt_1g"/>
    <property type="match status" value="1"/>
</dbReference>
<dbReference type="PRINTS" id="PR01041">
    <property type="entry name" value="TRNASYNTHMET"/>
</dbReference>
<dbReference type="SUPFAM" id="SSF47323">
    <property type="entry name" value="Anticodon-binding domain of a subclass of class I aminoacyl-tRNA synthetases"/>
    <property type="match status" value="1"/>
</dbReference>
<dbReference type="SUPFAM" id="SSF57770">
    <property type="entry name" value="Methionyl-tRNA synthetase (MetRS), Zn-domain"/>
    <property type="match status" value="1"/>
</dbReference>
<dbReference type="SUPFAM" id="SSF52374">
    <property type="entry name" value="Nucleotidylyl transferase"/>
    <property type="match status" value="1"/>
</dbReference>
<protein>
    <recommendedName>
        <fullName evidence="1">Methionine--tRNA ligase</fullName>
        <ecNumber evidence="1">6.1.1.10</ecNumber>
    </recommendedName>
    <alternativeName>
        <fullName evidence="1">Methionyl-tRNA synthetase</fullName>
        <shortName evidence="1">MetRS</shortName>
    </alternativeName>
</protein>
<name>SYM_THEPD</name>
<reference key="1">
    <citation type="journal article" date="2008" name="J. Bacteriol.">
        <title>Genome sequence of Thermofilum pendens reveals an exceptional loss of biosynthetic pathways without genome reduction.</title>
        <authorList>
            <person name="Anderson I."/>
            <person name="Rodriguez J."/>
            <person name="Susanti D."/>
            <person name="Porat I."/>
            <person name="Reich C."/>
            <person name="Ulrich L.E."/>
            <person name="Elkins J.G."/>
            <person name="Mavromatis K."/>
            <person name="Lykidis A."/>
            <person name="Kim E."/>
            <person name="Thompson L.S."/>
            <person name="Nolan M."/>
            <person name="Land M."/>
            <person name="Copeland A."/>
            <person name="Lapidus A."/>
            <person name="Lucas S."/>
            <person name="Detter C."/>
            <person name="Zhulin I.B."/>
            <person name="Olsen G.J."/>
            <person name="Whitman W."/>
            <person name="Mukhopadhyay B."/>
            <person name="Bristow J."/>
            <person name="Kyrpides N."/>
        </authorList>
    </citation>
    <scope>NUCLEOTIDE SEQUENCE [LARGE SCALE GENOMIC DNA]</scope>
    <source>
        <strain>DSM 2475 / Hrk 5</strain>
    </source>
</reference>
<accession>A1RXT9</accession>
<sequence length="565" mass="65322">MGDKARRKWLVLAAWPYAYGVPHLGNLIGSVLSADVAARFLRLAGDEVVFVSGSDMHGTPIEVEALKRGESPKDLAERNHEKIKELFERWEISFDNYSKTESPTHIKFVQDFYRRVYENGYVFSDTVQLYYCPKDKIFLPDRYIVGTCPYCGYDRAYGDQCENCGRLLEPTLLLNPRCAICGSTPELRTTTHWFFDLPKLTDALKRYIEENENLPPNARNMSLQILRDGLKPRALTRDNKWGIPAPFPGAEDKTIYVWMEAVLGYISATIEYFASKGEPEKWKEFWLDPETRSVYFIGKDNIPFHTLILPALLIASGEKYVLPWTVASTEYLLFRGLKFSKSRRIGVWIDEALEVFPADYWRFVLVSLRPEQKDMSFTWEEFLRIVNNDLNDNIGNFVHRVLVLVQRKFGGIAPAPLDFADEDLKFREEILARSREVAEFMYAFRFKEALTHILWLSSSGNSYLNFRKPWELDSESARTPAFLALHAVKALAIMLYPIIPRSSQEMWKLLGYKDDIANHRWHEINEAVPPGQELPSPRPLFRKISEEELKAAVEKIEELRASRSS</sequence>
<evidence type="ECO:0000255" key="1">
    <source>
        <dbReference type="HAMAP-Rule" id="MF_00098"/>
    </source>
</evidence>
<gene>
    <name evidence="1" type="primary">metG</name>
    <name type="ordered locus">Tpen_0615</name>
</gene>
<keyword id="KW-0030">Aminoacyl-tRNA synthetase</keyword>
<keyword id="KW-0067">ATP-binding</keyword>
<keyword id="KW-0963">Cytoplasm</keyword>
<keyword id="KW-0436">Ligase</keyword>
<keyword id="KW-0479">Metal-binding</keyword>
<keyword id="KW-0547">Nucleotide-binding</keyword>
<keyword id="KW-0648">Protein biosynthesis</keyword>
<keyword id="KW-1185">Reference proteome</keyword>
<keyword id="KW-0862">Zinc</keyword>